<comment type="function">
    <text evidence="1">One of the primary rRNA binding proteins, it binds directly to 16S rRNA central domain where it helps coordinate assembly of the platform of the 30S subunit.</text>
</comment>
<comment type="subunit">
    <text evidence="1">Part of the 30S ribosomal subunit.</text>
</comment>
<comment type="subcellular location">
    <subcellularLocation>
        <location>Plastid</location>
        <location>Chloroplast</location>
    </subcellularLocation>
</comment>
<comment type="similarity">
    <text evidence="2">Belongs to the universal ribosomal protein uS8 family.</text>
</comment>
<gene>
    <name type="primary">rps8</name>
</gene>
<accession>A4QKW6</accession>
<organism>
    <name type="scientific">Crucihimalaya wallichii</name>
    <name type="common">Rock-cress</name>
    <name type="synonym">Arabidopsis campestris</name>
    <dbReference type="NCBI Taxonomy" id="78192"/>
    <lineage>
        <taxon>Eukaryota</taxon>
        <taxon>Viridiplantae</taxon>
        <taxon>Streptophyta</taxon>
        <taxon>Embryophyta</taxon>
        <taxon>Tracheophyta</taxon>
        <taxon>Spermatophyta</taxon>
        <taxon>Magnoliopsida</taxon>
        <taxon>eudicotyledons</taxon>
        <taxon>Gunneridae</taxon>
        <taxon>Pentapetalae</taxon>
        <taxon>rosids</taxon>
        <taxon>malvids</taxon>
        <taxon>Brassicales</taxon>
        <taxon>Brassicaceae</taxon>
        <taxon>Crucihimalayeae</taxon>
        <taxon>Crucihimalaya</taxon>
    </lineage>
</organism>
<evidence type="ECO:0000250" key="1"/>
<evidence type="ECO:0000305" key="2"/>
<name>RR8_CRUWA</name>
<feature type="chain" id="PRO_0000290979" description="Small ribosomal subunit protein uS8c">
    <location>
        <begin position="1"/>
        <end position="134"/>
    </location>
</feature>
<proteinExistence type="inferred from homology"/>
<protein>
    <recommendedName>
        <fullName evidence="2">Small ribosomal subunit protein uS8c</fullName>
    </recommendedName>
    <alternativeName>
        <fullName>30S ribosomal protein S8, chloroplastic</fullName>
    </alternativeName>
</protein>
<geneLocation type="chloroplast"/>
<dbReference type="EMBL" id="AP009372">
    <property type="protein sequence ID" value="BAF50321.1"/>
    <property type="molecule type" value="Genomic_DNA"/>
</dbReference>
<dbReference type="RefSeq" id="YP_001123497.1">
    <property type="nucleotide sequence ID" value="NC_009271.1"/>
</dbReference>
<dbReference type="SMR" id="A4QKW6"/>
<dbReference type="GeneID" id="4962630"/>
<dbReference type="GO" id="GO:0009507">
    <property type="term" value="C:chloroplast"/>
    <property type="evidence" value="ECO:0007669"/>
    <property type="project" value="UniProtKB-SubCell"/>
</dbReference>
<dbReference type="GO" id="GO:1990904">
    <property type="term" value="C:ribonucleoprotein complex"/>
    <property type="evidence" value="ECO:0007669"/>
    <property type="project" value="UniProtKB-KW"/>
</dbReference>
<dbReference type="GO" id="GO:0005840">
    <property type="term" value="C:ribosome"/>
    <property type="evidence" value="ECO:0007669"/>
    <property type="project" value="UniProtKB-KW"/>
</dbReference>
<dbReference type="GO" id="GO:0019843">
    <property type="term" value="F:rRNA binding"/>
    <property type="evidence" value="ECO:0007669"/>
    <property type="project" value="UniProtKB-UniRule"/>
</dbReference>
<dbReference type="GO" id="GO:0003735">
    <property type="term" value="F:structural constituent of ribosome"/>
    <property type="evidence" value="ECO:0007669"/>
    <property type="project" value="InterPro"/>
</dbReference>
<dbReference type="GO" id="GO:0006412">
    <property type="term" value="P:translation"/>
    <property type="evidence" value="ECO:0007669"/>
    <property type="project" value="UniProtKB-UniRule"/>
</dbReference>
<dbReference type="FunFam" id="3.30.1490.10:FF:000001">
    <property type="entry name" value="30S ribosomal protein S8"/>
    <property type="match status" value="1"/>
</dbReference>
<dbReference type="FunFam" id="3.30.1370.30:FF:000004">
    <property type="entry name" value="30S ribosomal protein S8, chloroplastic"/>
    <property type="match status" value="1"/>
</dbReference>
<dbReference type="Gene3D" id="3.30.1370.30">
    <property type="match status" value="1"/>
</dbReference>
<dbReference type="Gene3D" id="3.30.1490.10">
    <property type="match status" value="1"/>
</dbReference>
<dbReference type="HAMAP" id="MF_01302_B">
    <property type="entry name" value="Ribosomal_uS8_B"/>
    <property type="match status" value="1"/>
</dbReference>
<dbReference type="InterPro" id="IPR000630">
    <property type="entry name" value="Ribosomal_uS8"/>
</dbReference>
<dbReference type="InterPro" id="IPR047863">
    <property type="entry name" value="Ribosomal_uS8_CS"/>
</dbReference>
<dbReference type="InterPro" id="IPR035987">
    <property type="entry name" value="Ribosomal_uS8_sf"/>
</dbReference>
<dbReference type="NCBIfam" id="NF001109">
    <property type="entry name" value="PRK00136.1"/>
    <property type="match status" value="1"/>
</dbReference>
<dbReference type="PANTHER" id="PTHR11758">
    <property type="entry name" value="40S RIBOSOMAL PROTEIN S15A"/>
    <property type="match status" value="1"/>
</dbReference>
<dbReference type="Pfam" id="PF00410">
    <property type="entry name" value="Ribosomal_S8"/>
    <property type="match status" value="1"/>
</dbReference>
<dbReference type="SUPFAM" id="SSF56047">
    <property type="entry name" value="Ribosomal protein S8"/>
    <property type="match status" value="1"/>
</dbReference>
<dbReference type="PROSITE" id="PS00053">
    <property type="entry name" value="RIBOSOMAL_S8"/>
    <property type="match status" value="1"/>
</dbReference>
<keyword id="KW-0150">Chloroplast</keyword>
<keyword id="KW-0934">Plastid</keyword>
<keyword id="KW-0687">Ribonucleoprotein</keyword>
<keyword id="KW-0689">Ribosomal protein</keyword>
<keyword id="KW-0694">RNA-binding</keyword>
<keyword id="KW-0699">rRNA-binding</keyword>
<reference key="1">
    <citation type="submission" date="2007-03" db="EMBL/GenBank/DDBJ databases">
        <title>Sequencing analysis of Crucihimalaya wallichii chloroplast DNA.</title>
        <authorList>
            <person name="Hosouchi T."/>
            <person name="Tsuruoka H."/>
            <person name="Kotani H."/>
        </authorList>
    </citation>
    <scope>NUCLEOTIDE SEQUENCE [LARGE SCALE GENOMIC DNA]</scope>
</reference>
<sequence length="134" mass="15479">MGKDTIADIITSIRNADMNRKGTVRIGSTNITESIVKILLREGFIENVRKHRENNQYFLILTLRHRRNKKESYKTILNLKRISRPGLRIYSNSQRIPRILGGIGIVILSTSQGIMTDREARLKRIGGEILCYIW</sequence>